<keyword id="KW-0119">Carbohydrate metabolism</keyword>
<keyword id="KW-0963">Cytoplasm</keyword>
<keyword id="KW-0378">Hydrolase</keyword>
<keyword id="KW-0460">Magnesium</keyword>
<keyword id="KW-0479">Metal-binding</keyword>
<keyword id="KW-0614">Plasmid</keyword>
<keyword id="KW-1185">Reference proteome</keyword>
<sequence>MSGATLEAYLASCTARGDDLSRDVAAVIQRLAKAALDIRKLVNQGALGTAFNGTHGGSNTDGDLQKDLDILCDDQFLTCLQGAPVACYASEELENPVLLDPSARLAVAIDPLDGSSNIDNNVSIGTIFSVLPAAKGPDVDPSQSFLQPGNRQLAAGFFIYGPQTALVLSLGKGTEIFIFSSRLGCFVEAYKSAIIPERAHEFAINMSNYRHWEEAIRLYVDDCLAGSEGPRERDFNMRWIASLVAETYRILIRGGIFLYPADGRKGYSQGRLRLVYEANPIAFIIENAGGAATTSIDRILDLVPENLHQRVPLVFGSRREVARITRYHVDPNMIGERAPLFGKRGLFRA</sequence>
<dbReference type="EC" id="3.1.3.11" evidence="1"/>
<dbReference type="EMBL" id="AL591985">
    <property type="protein sequence ID" value="CAC48595.1"/>
    <property type="molecule type" value="Genomic_DNA"/>
</dbReference>
<dbReference type="EMBL" id="AY013584">
    <property type="protein sequence ID" value="AAG42536.1"/>
    <property type="molecule type" value="Genomic_DNA"/>
</dbReference>
<dbReference type="PIR" id="C95866">
    <property type="entry name" value="C95866"/>
</dbReference>
<dbReference type="RefSeq" id="NP_436735.1">
    <property type="nucleotide sequence ID" value="NC_003078.1"/>
</dbReference>
<dbReference type="RefSeq" id="WP_003528720.1">
    <property type="nucleotide sequence ID" value="NC_003078.1"/>
</dbReference>
<dbReference type="SMR" id="Q9EXV4"/>
<dbReference type="EnsemblBacteria" id="CAC48595">
    <property type="protein sequence ID" value="CAC48595"/>
    <property type="gene ID" value="SM_b20202"/>
</dbReference>
<dbReference type="KEGG" id="sme:SM_b20202"/>
<dbReference type="PATRIC" id="fig|266834.11.peg.5111"/>
<dbReference type="eggNOG" id="COG0158">
    <property type="taxonomic scope" value="Bacteria"/>
</dbReference>
<dbReference type="HOGENOM" id="CLU_039977_0_0_5"/>
<dbReference type="OrthoDB" id="9806756at2"/>
<dbReference type="UniPathway" id="UPA00138"/>
<dbReference type="PRO" id="PR:Q9EXV4"/>
<dbReference type="Proteomes" id="UP000001976">
    <property type="component" value="Plasmid pSymB"/>
</dbReference>
<dbReference type="GO" id="GO:0005829">
    <property type="term" value="C:cytosol"/>
    <property type="evidence" value="ECO:0007669"/>
    <property type="project" value="TreeGrafter"/>
</dbReference>
<dbReference type="GO" id="GO:0042132">
    <property type="term" value="F:fructose 1,6-bisphosphate 1-phosphatase activity"/>
    <property type="evidence" value="ECO:0007669"/>
    <property type="project" value="UniProtKB-UniRule"/>
</dbReference>
<dbReference type="GO" id="GO:0000287">
    <property type="term" value="F:magnesium ion binding"/>
    <property type="evidence" value="ECO:0007669"/>
    <property type="project" value="UniProtKB-UniRule"/>
</dbReference>
<dbReference type="GO" id="GO:0030388">
    <property type="term" value="P:fructose 1,6-bisphosphate metabolic process"/>
    <property type="evidence" value="ECO:0007669"/>
    <property type="project" value="TreeGrafter"/>
</dbReference>
<dbReference type="GO" id="GO:0006002">
    <property type="term" value="P:fructose 6-phosphate metabolic process"/>
    <property type="evidence" value="ECO:0007669"/>
    <property type="project" value="TreeGrafter"/>
</dbReference>
<dbReference type="GO" id="GO:0006000">
    <property type="term" value="P:fructose metabolic process"/>
    <property type="evidence" value="ECO:0007669"/>
    <property type="project" value="TreeGrafter"/>
</dbReference>
<dbReference type="GO" id="GO:0006094">
    <property type="term" value="P:gluconeogenesis"/>
    <property type="evidence" value="ECO:0007669"/>
    <property type="project" value="UniProtKB-UniRule"/>
</dbReference>
<dbReference type="GO" id="GO:0005986">
    <property type="term" value="P:sucrose biosynthetic process"/>
    <property type="evidence" value="ECO:0007669"/>
    <property type="project" value="TreeGrafter"/>
</dbReference>
<dbReference type="CDD" id="cd00354">
    <property type="entry name" value="FBPase"/>
    <property type="match status" value="1"/>
</dbReference>
<dbReference type="FunFam" id="3.40.190.80:FF:000011">
    <property type="entry name" value="Fructose-1,6-bisphosphatase class 1"/>
    <property type="match status" value="1"/>
</dbReference>
<dbReference type="Gene3D" id="3.40.190.80">
    <property type="match status" value="1"/>
</dbReference>
<dbReference type="Gene3D" id="3.30.540.10">
    <property type="entry name" value="Fructose-1,6-Bisphosphatase, subunit A, domain 1"/>
    <property type="match status" value="1"/>
</dbReference>
<dbReference type="HAMAP" id="MF_01855">
    <property type="entry name" value="FBPase_class1"/>
    <property type="match status" value="1"/>
</dbReference>
<dbReference type="InterPro" id="IPR044015">
    <property type="entry name" value="FBPase_C_dom"/>
</dbReference>
<dbReference type="InterPro" id="IPR000146">
    <property type="entry name" value="FBPase_class-1"/>
</dbReference>
<dbReference type="InterPro" id="IPR033391">
    <property type="entry name" value="FBPase_N"/>
</dbReference>
<dbReference type="InterPro" id="IPR028343">
    <property type="entry name" value="FBPtase"/>
</dbReference>
<dbReference type="InterPro" id="IPR020548">
    <property type="entry name" value="Fructose_bisphosphatase_AS"/>
</dbReference>
<dbReference type="NCBIfam" id="NF006779">
    <property type="entry name" value="PRK09293.1-3"/>
    <property type="match status" value="1"/>
</dbReference>
<dbReference type="NCBIfam" id="NF006780">
    <property type="entry name" value="PRK09293.1-4"/>
    <property type="match status" value="1"/>
</dbReference>
<dbReference type="PANTHER" id="PTHR11556">
    <property type="entry name" value="FRUCTOSE-1,6-BISPHOSPHATASE-RELATED"/>
    <property type="match status" value="1"/>
</dbReference>
<dbReference type="PANTHER" id="PTHR11556:SF35">
    <property type="entry name" value="SEDOHEPTULOSE-1,7-BISPHOSPHATASE, CHLOROPLASTIC"/>
    <property type="match status" value="1"/>
</dbReference>
<dbReference type="Pfam" id="PF00316">
    <property type="entry name" value="FBPase"/>
    <property type="match status" value="1"/>
</dbReference>
<dbReference type="Pfam" id="PF18913">
    <property type="entry name" value="FBPase_C"/>
    <property type="match status" value="1"/>
</dbReference>
<dbReference type="PIRSF" id="PIRSF500210">
    <property type="entry name" value="FBPtase"/>
    <property type="match status" value="1"/>
</dbReference>
<dbReference type="PIRSF" id="PIRSF000904">
    <property type="entry name" value="FBPtase_SBPase"/>
    <property type="match status" value="1"/>
</dbReference>
<dbReference type="PRINTS" id="PR00115">
    <property type="entry name" value="F16BPHPHTASE"/>
</dbReference>
<dbReference type="SUPFAM" id="SSF56655">
    <property type="entry name" value="Carbohydrate phosphatase"/>
    <property type="match status" value="1"/>
</dbReference>
<dbReference type="PROSITE" id="PS00124">
    <property type="entry name" value="FBPASE"/>
    <property type="match status" value="1"/>
</dbReference>
<organism>
    <name type="scientific">Rhizobium meliloti (strain 1021)</name>
    <name type="common">Ensifer meliloti</name>
    <name type="synonym">Sinorhizobium meliloti</name>
    <dbReference type="NCBI Taxonomy" id="266834"/>
    <lineage>
        <taxon>Bacteria</taxon>
        <taxon>Pseudomonadati</taxon>
        <taxon>Pseudomonadota</taxon>
        <taxon>Alphaproteobacteria</taxon>
        <taxon>Hyphomicrobiales</taxon>
        <taxon>Rhizobiaceae</taxon>
        <taxon>Sinorhizobium/Ensifer group</taxon>
        <taxon>Sinorhizobium</taxon>
    </lineage>
</organism>
<gene>
    <name evidence="1" type="primary">fbp</name>
    <name type="synonym">cbbF</name>
    <name type="ordered locus">RB0195</name>
    <name type="ORF">SMb20202</name>
</gene>
<proteinExistence type="inferred from homology"/>
<comment type="catalytic activity">
    <reaction evidence="1">
        <text>beta-D-fructose 1,6-bisphosphate + H2O = beta-D-fructose 6-phosphate + phosphate</text>
        <dbReference type="Rhea" id="RHEA:11064"/>
        <dbReference type="ChEBI" id="CHEBI:15377"/>
        <dbReference type="ChEBI" id="CHEBI:32966"/>
        <dbReference type="ChEBI" id="CHEBI:43474"/>
        <dbReference type="ChEBI" id="CHEBI:57634"/>
        <dbReference type="EC" id="3.1.3.11"/>
    </reaction>
</comment>
<comment type="cofactor">
    <cofactor evidence="1">
        <name>Mg(2+)</name>
        <dbReference type="ChEBI" id="CHEBI:18420"/>
    </cofactor>
    <text evidence="1">Binds 2 magnesium ions per subunit.</text>
</comment>
<comment type="pathway">
    <text evidence="1">Carbohydrate biosynthesis; gluconeogenesis.</text>
</comment>
<comment type="subunit">
    <text evidence="1">Homotetramer.</text>
</comment>
<comment type="subcellular location">
    <subcellularLocation>
        <location evidence="1">Cytoplasm</location>
    </subcellularLocation>
</comment>
<comment type="similarity">
    <text evidence="1">Belongs to the FBPase class 1 family.</text>
</comment>
<evidence type="ECO:0000255" key="1">
    <source>
        <dbReference type="HAMAP-Rule" id="MF_01855"/>
    </source>
</evidence>
<protein>
    <recommendedName>
        <fullName evidence="1">Fructose-1,6-bisphosphatase class 1</fullName>
        <shortName evidence="1">FBPase class 1</shortName>
        <ecNumber evidence="1">3.1.3.11</ecNumber>
    </recommendedName>
    <alternativeName>
        <fullName evidence="1">D-fructose-1,6-bisphosphate 1-phosphohydrolase class 1</fullName>
    </alternativeName>
</protein>
<geneLocation type="plasmid">
    <name>pSymB</name>
    <name>megaplasmid 2</name>
</geneLocation>
<name>F16PA_RHIME</name>
<feature type="chain" id="PRO_0000200484" description="Fructose-1,6-bisphosphatase class 1">
    <location>
        <begin position="1"/>
        <end position="349"/>
    </location>
</feature>
<feature type="binding site" evidence="1">
    <location>
        <position position="91"/>
    </location>
    <ligand>
        <name>Mg(2+)</name>
        <dbReference type="ChEBI" id="CHEBI:18420"/>
        <label>1</label>
    </ligand>
</feature>
<feature type="binding site" evidence="1">
    <location>
        <position position="110"/>
    </location>
    <ligand>
        <name>Mg(2+)</name>
        <dbReference type="ChEBI" id="CHEBI:18420"/>
        <label>1</label>
    </ligand>
</feature>
<feature type="binding site" evidence="1">
    <location>
        <position position="110"/>
    </location>
    <ligand>
        <name>Mg(2+)</name>
        <dbReference type="ChEBI" id="CHEBI:18420"/>
        <label>2</label>
    </ligand>
</feature>
<feature type="binding site" evidence="1">
    <location>
        <position position="112"/>
    </location>
    <ligand>
        <name>Mg(2+)</name>
        <dbReference type="ChEBI" id="CHEBI:18420"/>
        <label>1</label>
    </ligand>
</feature>
<feature type="binding site" evidence="1">
    <location>
        <begin position="113"/>
        <end position="116"/>
    </location>
    <ligand>
        <name>substrate</name>
    </ligand>
</feature>
<feature type="binding site" evidence="1">
    <location>
        <position position="113"/>
    </location>
    <ligand>
        <name>Mg(2+)</name>
        <dbReference type="ChEBI" id="CHEBI:18420"/>
        <label>2</label>
    </ligand>
</feature>
<feature type="binding site" evidence="1">
    <location>
        <position position="205"/>
    </location>
    <ligand>
        <name>substrate</name>
    </ligand>
</feature>
<feature type="binding site" evidence="1">
    <location>
        <position position="277"/>
    </location>
    <ligand>
        <name>Mg(2+)</name>
        <dbReference type="ChEBI" id="CHEBI:18420"/>
        <label>2</label>
    </ligand>
</feature>
<reference key="1">
    <citation type="journal article" date="2001" name="Proc. Natl. Acad. Sci. U.S.A.">
        <title>The complete sequence of the 1,683-kb pSymB megaplasmid from the N2-fixing endosymbiont Sinorhizobium meliloti.</title>
        <authorList>
            <person name="Finan T.M."/>
            <person name="Weidner S."/>
            <person name="Wong K."/>
            <person name="Buhrmester J."/>
            <person name="Chain P."/>
            <person name="Vorhoelter F.J."/>
            <person name="Hernandez-Lucas I."/>
            <person name="Becker A."/>
            <person name="Cowie A."/>
            <person name="Gouzy J."/>
            <person name="Golding B."/>
            <person name="Puehler A."/>
        </authorList>
    </citation>
    <scope>NUCLEOTIDE SEQUENCE [LARGE SCALE GENOMIC DNA]</scope>
    <source>
        <strain>1021</strain>
    </source>
</reference>
<reference key="2">
    <citation type="journal article" date="2001" name="Science">
        <title>The composite genome of the legume symbiont Sinorhizobium meliloti.</title>
        <authorList>
            <person name="Galibert F."/>
            <person name="Finan T.M."/>
            <person name="Long S.R."/>
            <person name="Puehler A."/>
            <person name="Abola P."/>
            <person name="Ampe F."/>
            <person name="Barloy-Hubler F."/>
            <person name="Barnett M.J."/>
            <person name="Becker A."/>
            <person name="Boistard P."/>
            <person name="Bothe G."/>
            <person name="Boutry M."/>
            <person name="Bowser L."/>
            <person name="Buhrmester J."/>
            <person name="Cadieu E."/>
            <person name="Capela D."/>
            <person name="Chain P."/>
            <person name="Cowie A."/>
            <person name="Davis R.W."/>
            <person name="Dreano S."/>
            <person name="Federspiel N.A."/>
            <person name="Fisher R.F."/>
            <person name="Gloux S."/>
            <person name="Godrie T."/>
            <person name="Goffeau A."/>
            <person name="Golding B."/>
            <person name="Gouzy J."/>
            <person name="Gurjal M."/>
            <person name="Hernandez-Lucas I."/>
            <person name="Hong A."/>
            <person name="Huizar L."/>
            <person name="Hyman R.W."/>
            <person name="Jones T."/>
            <person name="Kahn D."/>
            <person name="Kahn M.L."/>
            <person name="Kalman S."/>
            <person name="Keating D.H."/>
            <person name="Kiss E."/>
            <person name="Komp C."/>
            <person name="Lelaure V."/>
            <person name="Masuy D."/>
            <person name="Palm C."/>
            <person name="Peck M.C."/>
            <person name="Pohl T.M."/>
            <person name="Portetelle D."/>
            <person name="Purnelle B."/>
            <person name="Ramsperger U."/>
            <person name="Surzycki R."/>
            <person name="Thebault P."/>
            <person name="Vandenbol M."/>
            <person name="Vorhoelter F.J."/>
            <person name="Weidner S."/>
            <person name="Wells D.H."/>
            <person name="Wong K."/>
            <person name="Yeh K.-C."/>
            <person name="Batut J."/>
        </authorList>
    </citation>
    <scope>NUCLEOTIDE SEQUENCE [LARGE SCALE GENOMIC DNA]</scope>
    <source>
        <strain>1021</strain>
    </source>
</reference>
<reference key="3">
    <citation type="submission" date="2000-10" db="EMBL/GenBank/DDBJ databases">
        <title>Mineral phosphate solubilization in Sinorhizobium meliloti.</title>
        <authorList>
            <person name="Finan T.M."/>
            <person name="Aneja P."/>
            <person name="Chain P."/>
            <person name="Napper K."/>
            <person name="Golding B."/>
        </authorList>
    </citation>
    <scope>NUCLEOTIDE SEQUENCE [GENOMIC DNA] OF 1-202</scope>
    <source>
        <strain>1021</strain>
    </source>
</reference>
<accession>Q9EXV4</accession>